<proteinExistence type="inferred from homology"/>
<dbReference type="EC" id="2.5.1.78" evidence="1"/>
<dbReference type="EMBL" id="CP000036">
    <property type="protein sequence ID" value="ABB65022.1"/>
    <property type="molecule type" value="Genomic_DNA"/>
</dbReference>
<dbReference type="SMR" id="Q325I6"/>
<dbReference type="KEGG" id="sbo:SBO_0309"/>
<dbReference type="HOGENOM" id="CLU_089358_1_1_6"/>
<dbReference type="UniPathway" id="UPA00275">
    <property type="reaction ID" value="UER00404"/>
</dbReference>
<dbReference type="Proteomes" id="UP000007067">
    <property type="component" value="Chromosome"/>
</dbReference>
<dbReference type="GO" id="GO:0005829">
    <property type="term" value="C:cytosol"/>
    <property type="evidence" value="ECO:0007669"/>
    <property type="project" value="TreeGrafter"/>
</dbReference>
<dbReference type="GO" id="GO:0009349">
    <property type="term" value="C:riboflavin synthase complex"/>
    <property type="evidence" value="ECO:0007669"/>
    <property type="project" value="InterPro"/>
</dbReference>
<dbReference type="GO" id="GO:0000906">
    <property type="term" value="F:6,7-dimethyl-8-ribityllumazine synthase activity"/>
    <property type="evidence" value="ECO:0007669"/>
    <property type="project" value="UniProtKB-UniRule"/>
</dbReference>
<dbReference type="GO" id="GO:0009231">
    <property type="term" value="P:riboflavin biosynthetic process"/>
    <property type="evidence" value="ECO:0007669"/>
    <property type="project" value="UniProtKB-UniRule"/>
</dbReference>
<dbReference type="CDD" id="cd09209">
    <property type="entry name" value="Lumazine_synthase-I"/>
    <property type="match status" value="1"/>
</dbReference>
<dbReference type="FunFam" id="3.40.50.960:FF:000001">
    <property type="entry name" value="6,7-dimethyl-8-ribityllumazine synthase"/>
    <property type="match status" value="1"/>
</dbReference>
<dbReference type="Gene3D" id="3.40.50.960">
    <property type="entry name" value="Lumazine/riboflavin synthase"/>
    <property type="match status" value="1"/>
</dbReference>
<dbReference type="HAMAP" id="MF_00178">
    <property type="entry name" value="Lumazine_synth"/>
    <property type="match status" value="1"/>
</dbReference>
<dbReference type="InterPro" id="IPR034964">
    <property type="entry name" value="LS"/>
</dbReference>
<dbReference type="InterPro" id="IPR002180">
    <property type="entry name" value="LS/RS"/>
</dbReference>
<dbReference type="InterPro" id="IPR036467">
    <property type="entry name" value="LS/RS_sf"/>
</dbReference>
<dbReference type="NCBIfam" id="TIGR00114">
    <property type="entry name" value="lumazine-synth"/>
    <property type="match status" value="1"/>
</dbReference>
<dbReference type="NCBIfam" id="NF000812">
    <property type="entry name" value="PRK00061.1-4"/>
    <property type="match status" value="1"/>
</dbReference>
<dbReference type="PANTHER" id="PTHR21058:SF0">
    <property type="entry name" value="6,7-DIMETHYL-8-RIBITYLLUMAZINE SYNTHASE"/>
    <property type="match status" value="1"/>
</dbReference>
<dbReference type="PANTHER" id="PTHR21058">
    <property type="entry name" value="6,7-DIMETHYL-8-RIBITYLLUMAZINE SYNTHASE DMRL SYNTHASE LUMAZINE SYNTHASE"/>
    <property type="match status" value="1"/>
</dbReference>
<dbReference type="Pfam" id="PF00885">
    <property type="entry name" value="DMRL_synthase"/>
    <property type="match status" value="1"/>
</dbReference>
<dbReference type="SUPFAM" id="SSF52121">
    <property type="entry name" value="Lumazine synthase"/>
    <property type="match status" value="1"/>
</dbReference>
<protein>
    <recommendedName>
        <fullName evidence="1">6,7-dimethyl-8-ribityllumazine synthase</fullName>
        <shortName evidence="1">DMRL synthase</shortName>
        <shortName evidence="1">LS</shortName>
        <shortName evidence="1">Lumazine synthase</shortName>
        <ecNumber evidence="1">2.5.1.78</ecNumber>
    </recommendedName>
</protein>
<accession>Q325I6</accession>
<sequence>MNIIEANVATPDARVAITIARFNNFINDSLLEGAIDALKRIGQVKDENITVVWVPGAYELPLAAGALAKTGKYDAVIALGTVIRGGTAHFEYVAGGASNGLAHVAQDSEIPVAFGVLTTESIEQAIERAGTKAGNKGAEAALTALEMINVLKAIKA</sequence>
<keyword id="KW-0686">Riboflavin biosynthesis</keyword>
<keyword id="KW-0808">Transferase</keyword>
<comment type="function">
    <text evidence="1">Catalyzes the formation of 6,7-dimethyl-8-ribityllumazine by condensation of 5-amino-6-(D-ribitylamino)uracil with 3,4-dihydroxy-2-butanone 4-phosphate. This is the penultimate step in the biosynthesis of riboflavin.</text>
</comment>
<comment type="catalytic activity">
    <reaction evidence="1">
        <text>(2S)-2-hydroxy-3-oxobutyl phosphate + 5-amino-6-(D-ribitylamino)uracil = 6,7-dimethyl-8-(1-D-ribityl)lumazine + phosphate + 2 H2O + H(+)</text>
        <dbReference type="Rhea" id="RHEA:26152"/>
        <dbReference type="ChEBI" id="CHEBI:15377"/>
        <dbReference type="ChEBI" id="CHEBI:15378"/>
        <dbReference type="ChEBI" id="CHEBI:15934"/>
        <dbReference type="ChEBI" id="CHEBI:43474"/>
        <dbReference type="ChEBI" id="CHEBI:58201"/>
        <dbReference type="ChEBI" id="CHEBI:58830"/>
        <dbReference type="EC" id="2.5.1.78"/>
    </reaction>
</comment>
<comment type="pathway">
    <text evidence="1">Cofactor biosynthesis; riboflavin biosynthesis; riboflavin from 2-hydroxy-3-oxobutyl phosphate and 5-amino-6-(D-ribitylamino)uracil: step 1/2.</text>
</comment>
<comment type="subunit">
    <text evidence="1">Forms an icosahedral capsid composed of 60 subunits, arranged as a dodecamer of pentamers.</text>
</comment>
<comment type="similarity">
    <text evidence="1">Belongs to the DMRL synthase family.</text>
</comment>
<reference key="1">
    <citation type="journal article" date="2005" name="Nucleic Acids Res.">
        <title>Genome dynamics and diversity of Shigella species, the etiologic agents of bacillary dysentery.</title>
        <authorList>
            <person name="Yang F."/>
            <person name="Yang J."/>
            <person name="Zhang X."/>
            <person name="Chen L."/>
            <person name="Jiang Y."/>
            <person name="Yan Y."/>
            <person name="Tang X."/>
            <person name="Wang J."/>
            <person name="Xiong Z."/>
            <person name="Dong J."/>
            <person name="Xue Y."/>
            <person name="Zhu Y."/>
            <person name="Xu X."/>
            <person name="Sun L."/>
            <person name="Chen S."/>
            <person name="Nie H."/>
            <person name="Peng J."/>
            <person name="Xu J."/>
            <person name="Wang Y."/>
            <person name="Yuan Z."/>
            <person name="Wen Y."/>
            <person name="Yao Z."/>
            <person name="Shen Y."/>
            <person name="Qiang B."/>
            <person name="Hou Y."/>
            <person name="Yu J."/>
            <person name="Jin Q."/>
        </authorList>
    </citation>
    <scope>NUCLEOTIDE SEQUENCE [LARGE SCALE GENOMIC DNA]</scope>
    <source>
        <strain>Sb227</strain>
    </source>
</reference>
<evidence type="ECO:0000255" key="1">
    <source>
        <dbReference type="HAMAP-Rule" id="MF_00178"/>
    </source>
</evidence>
<organism>
    <name type="scientific">Shigella boydii serotype 4 (strain Sb227)</name>
    <dbReference type="NCBI Taxonomy" id="300268"/>
    <lineage>
        <taxon>Bacteria</taxon>
        <taxon>Pseudomonadati</taxon>
        <taxon>Pseudomonadota</taxon>
        <taxon>Gammaproteobacteria</taxon>
        <taxon>Enterobacterales</taxon>
        <taxon>Enterobacteriaceae</taxon>
        <taxon>Shigella</taxon>
    </lineage>
</organism>
<gene>
    <name evidence="1" type="primary">ribH</name>
    <name type="ordered locus">SBO_0309</name>
</gene>
<name>RISB_SHIBS</name>
<feature type="chain" id="PRO_1000040516" description="6,7-dimethyl-8-ribityllumazine synthase">
    <location>
        <begin position="1"/>
        <end position="156"/>
    </location>
</feature>
<feature type="active site" description="Proton donor" evidence="1">
    <location>
        <position position="89"/>
    </location>
</feature>
<feature type="binding site" evidence="1">
    <location>
        <position position="22"/>
    </location>
    <ligand>
        <name>5-amino-6-(D-ribitylamino)uracil</name>
        <dbReference type="ChEBI" id="CHEBI:15934"/>
    </ligand>
</feature>
<feature type="binding site" evidence="1">
    <location>
        <begin position="57"/>
        <end position="59"/>
    </location>
    <ligand>
        <name>5-amino-6-(D-ribitylamino)uracil</name>
        <dbReference type="ChEBI" id="CHEBI:15934"/>
    </ligand>
</feature>
<feature type="binding site" evidence="1">
    <location>
        <begin position="81"/>
        <end position="83"/>
    </location>
    <ligand>
        <name>5-amino-6-(D-ribitylamino)uracil</name>
        <dbReference type="ChEBI" id="CHEBI:15934"/>
    </ligand>
</feature>
<feature type="binding site" evidence="1">
    <location>
        <begin position="86"/>
        <end position="87"/>
    </location>
    <ligand>
        <name>(2S)-2-hydroxy-3-oxobutyl phosphate</name>
        <dbReference type="ChEBI" id="CHEBI:58830"/>
    </ligand>
</feature>
<feature type="binding site" evidence="1">
    <location>
        <position position="114"/>
    </location>
    <ligand>
        <name>5-amino-6-(D-ribitylamino)uracil</name>
        <dbReference type="ChEBI" id="CHEBI:15934"/>
    </ligand>
</feature>
<feature type="binding site" evidence="1">
    <location>
        <position position="128"/>
    </location>
    <ligand>
        <name>(2S)-2-hydroxy-3-oxobutyl phosphate</name>
        <dbReference type="ChEBI" id="CHEBI:58830"/>
    </ligand>
</feature>